<accession>P0A432</accession>
<accession>P55221</accession>
<accession>Q54074</accession>
<evidence type="ECO:0000250" key="1">
    <source>
        <dbReference type="UniProtKB" id="P10549"/>
    </source>
</evidence>
<evidence type="ECO:0000269" key="2">
    <source>
    </source>
</evidence>
<evidence type="ECO:0000303" key="3">
    <source>
    </source>
</evidence>
<evidence type="ECO:0000305" key="4"/>
<evidence type="ECO:0007829" key="5">
    <source>
        <dbReference type="PDB" id="5G38"/>
    </source>
</evidence>
<dbReference type="EMBL" id="D12698">
    <property type="protein sequence ID" value="BAA02195.1"/>
    <property type="molecule type" value="Genomic_DNA"/>
</dbReference>
<dbReference type="EMBL" id="D14438">
    <property type="protein sequence ID" value="BAA03321.1"/>
    <property type="molecule type" value="Genomic_DNA"/>
</dbReference>
<dbReference type="PDB" id="5G38">
    <property type="method" value="X-ray"/>
    <property type="resolution" value="1.15 A"/>
    <property type="chains" value="A=45-80, A=90-174, A=219-247, A=257-272"/>
</dbReference>
<dbReference type="PDB" id="5G39">
    <property type="method" value="X-ray"/>
    <property type="resolution" value="1.50 A"/>
    <property type="chains" value="A=45-80, A=90-174, A=219-247, A=257-272"/>
</dbReference>
<dbReference type="PDB" id="5G3A">
    <property type="method" value="X-ray"/>
    <property type="resolution" value="1.22 A"/>
    <property type="chains" value="A=45-80, A=90-174, A=219-247"/>
</dbReference>
<dbReference type="PDBsum" id="5G38"/>
<dbReference type="PDBsum" id="5G39"/>
<dbReference type="PDBsum" id="5G3A"/>
<dbReference type="SMR" id="P0A432"/>
<dbReference type="GO" id="GO:0009654">
    <property type="term" value="C:photosystem II oxygen evolving complex"/>
    <property type="evidence" value="ECO:0007669"/>
    <property type="project" value="InterPro"/>
</dbReference>
<dbReference type="GO" id="GO:0031676">
    <property type="term" value="C:plasma membrane-derived thylakoid membrane"/>
    <property type="evidence" value="ECO:0007669"/>
    <property type="project" value="UniProtKB-SubCell"/>
</dbReference>
<dbReference type="GO" id="GO:0010242">
    <property type="term" value="F:oxygen evolving activity"/>
    <property type="evidence" value="ECO:0007669"/>
    <property type="project" value="InterPro"/>
</dbReference>
<dbReference type="GO" id="GO:0010207">
    <property type="term" value="P:photosystem II assembly"/>
    <property type="evidence" value="ECO:0007669"/>
    <property type="project" value="InterPro"/>
</dbReference>
<dbReference type="GO" id="GO:0042549">
    <property type="term" value="P:photosystem II stabilization"/>
    <property type="evidence" value="ECO:0007669"/>
    <property type="project" value="InterPro"/>
</dbReference>
<dbReference type="Gene3D" id="3.30.2050.10">
    <property type="entry name" value="photosynthetic oxygen evolving center domain"/>
    <property type="match status" value="1"/>
</dbReference>
<dbReference type="Gene3D" id="2.40.160.30">
    <property type="entry name" value="Photosystem II, cytochrome c-550 precursor"/>
    <property type="match status" value="1"/>
</dbReference>
<dbReference type="InterPro" id="IPR011250">
    <property type="entry name" value="OMP/PagP_b-brl"/>
</dbReference>
<dbReference type="InterPro" id="IPR002628">
    <property type="entry name" value="PsbO"/>
</dbReference>
<dbReference type="PANTHER" id="PTHR34058">
    <property type="entry name" value="OXYGEN-EVOLVING ENHANCER PROTEIN 1-2, CHLOROPLASTIC"/>
    <property type="match status" value="1"/>
</dbReference>
<dbReference type="Pfam" id="PF01716">
    <property type="entry name" value="MSP"/>
    <property type="match status" value="1"/>
</dbReference>
<dbReference type="SUPFAM" id="SSF56925">
    <property type="entry name" value="OMPA-like"/>
    <property type="match status" value="1"/>
</dbReference>
<feature type="signal peptide" evidence="2">
    <location>
        <begin position="1"/>
        <end position="26"/>
    </location>
</feature>
<feature type="chain" id="PRO_0000029568" description="Photosystem II extrinsic protein O">
    <location>
        <begin position="27"/>
        <end position="272"/>
    </location>
</feature>
<feature type="strand" evidence="5">
    <location>
        <begin position="64"/>
        <end position="80"/>
    </location>
</feature>
<feature type="strand" evidence="5">
    <location>
        <begin position="90"/>
        <end position="93"/>
    </location>
</feature>
<feature type="strand" evidence="5">
    <location>
        <begin position="104"/>
        <end position="113"/>
    </location>
</feature>
<feature type="strand" evidence="5">
    <location>
        <begin position="119"/>
        <end position="122"/>
    </location>
</feature>
<feature type="strand" evidence="5">
    <location>
        <begin position="125"/>
        <end position="127"/>
    </location>
</feature>
<feature type="strand" evidence="5">
    <location>
        <begin position="129"/>
        <end position="135"/>
    </location>
</feature>
<feature type="strand" evidence="5">
    <location>
        <begin position="141"/>
        <end position="147"/>
    </location>
</feature>
<feature type="strand" evidence="5">
    <location>
        <begin position="152"/>
        <end position="154"/>
    </location>
</feature>
<feature type="strand" evidence="5">
    <location>
        <begin position="160"/>
        <end position="162"/>
    </location>
</feature>
<feature type="strand" evidence="5">
    <location>
        <begin position="167"/>
        <end position="174"/>
    </location>
</feature>
<feature type="strand" evidence="5">
    <location>
        <begin position="219"/>
        <end position="231"/>
    </location>
</feature>
<feature type="turn" evidence="5">
    <location>
        <begin position="232"/>
        <end position="235"/>
    </location>
</feature>
<feature type="strand" evidence="5">
    <location>
        <begin position="236"/>
        <end position="246"/>
    </location>
</feature>
<feature type="strand" evidence="5">
    <location>
        <begin position="258"/>
        <end position="271"/>
    </location>
</feature>
<gene>
    <name type="primary">psbO</name>
</gene>
<reference key="1">
    <citation type="journal article" date="1993" name="Biochim. Biophys. Acta">
        <title>Nucleotide sequence of the Mn-stabilizing protein gene of the thermophilic cyanobacterium Synechococcus elongatus.</title>
        <authorList>
            <person name="Miura K."/>
            <person name="Shimazu T."/>
            <person name="Motoki A."/>
            <person name="Kanai S."/>
            <person name="Hirano M."/>
            <person name="Katoh S."/>
        </authorList>
    </citation>
    <scope>NUCLEOTIDE SEQUENCE [GENOMIC DNA]</scope>
    <scope>PROTEIN SEQUENCE OF 27-43; 86-93; 96-107; 116-129; 170-178; 187-194; 204-214; 230-246 AND 261-267</scope>
</reference>
<protein>
    <recommendedName>
        <fullName>Photosystem II extrinsic protein O</fullName>
        <shortName>PsbO</shortName>
    </recommendedName>
    <alternativeName>
        <fullName evidence="3">Photosystem II manganese-stabilizing polypeptide</fullName>
        <shortName evidence="3">MSP</shortName>
    </alternativeName>
</protein>
<proteinExistence type="evidence at protein level"/>
<sequence length="272" mass="29608">MKYRILMATLLAVCLGIFSLSAPAFAAKQTLTYDDIVGTGLANKCPTLDDTARGAYPIDSSQTYRIARLCLQPTTFLVKEEPKNKRQEAEFVPTKLVTRETTSLDQIQGELKVNSDGSLTFVEEDGIDFQPVTVQMAGGERIPLLFTVKNLVASTQPNVTSITTSTDFKGEFNVPSYRTANFLDPKGRGLASGYDSAIALPQAKEEELARANVKRFSLTKGQISLNVAKVDGRTGEIAGTFESEQLSDDDMGAHEPHEVKIQGVFYASIEPA</sequence>
<keyword id="KW-0002">3D-structure</keyword>
<keyword id="KW-0903">Direct protein sequencing</keyword>
<keyword id="KW-0464">Manganese</keyword>
<keyword id="KW-0472">Membrane</keyword>
<keyword id="KW-0602">Photosynthesis</keyword>
<keyword id="KW-0604">Photosystem II</keyword>
<keyword id="KW-0732">Signal</keyword>
<keyword id="KW-0793">Thylakoid</keyword>
<comment type="function">
    <text evidence="1">One of the extrinsic, lumenal subunits of photosystem II (PSII), which stabilize and protect the oxygen-evolving complex. PSII is a light-driven water plastoquinone oxidoreductase, using light energy to abstract electrons from H(2)O, generating a proton gradient subsequently used for ATP formation. Required for dimerization of PSII and for binding of PsbQ to PSII.</text>
</comment>
<comment type="subunit">
    <text evidence="1">PSII is composed of 1 copy each of membrane proteins PsbA, PsbB, PsbC, PsbD, PsbE, PsbF, PsbH, PsbI, PsbJ, PsbK, PsbL, PsbM, PsbT, PsbX, PsbY, PsbZ, Psb30/Ycf12, peripheral proteins PsbO, CyanoQ (PsbQ), PsbU, PsbV and a large number of cofactors. It forms dimeric complexes.</text>
</comment>
<comment type="subcellular location">
    <subcellularLocation>
        <location evidence="1">Cellular thylakoid membrane</location>
        <topology evidence="1">Peripheral membrane protein</topology>
        <orientation evidence="1">Lumenal side</orientation>
    </subcellularLocation>
</comment>
<comment type="similarity">
    <text evidence="4">Belongs to the PsbO family.</text>
</comment>
<name>PSBO_SYNEL</name>
<organism>
    <name type="scientific">Synechococcus elongatus</name>
    <dbReference type="NCBI Taxonomy" id="32046"/>
    <lineage>
        <taxon>Bacteria</taxon>
        <taxon>Bacillati</taxon>
        <taxon>Cyanobacteriota</taxon>
        <taxon>Cyanophyceae</taxon>
        <taxon>Synechococcales</taxon>
        <taxon>Synechococcaceae</taxon>
        <taxon>Synechococcus</taxon>
    </lineage>
</organism>